<reference key="1">
    <citation type="journal article" date="1998" name="Science">
        <title>Genome sequence of the nematode C. elegans: a platform for investigating biology.</title>
        <authorList>
            <consortium name="The C. elegans sequencing consortium"/>
        </authorList>
    </citation>
    <scope>NUCLEOTIDE SEQUENCE [LARGE SCALE GENOMIC DNA]</scope>
    <source>
        <strain>Bristol N2</strain>
    </source>
</reference>
<reference key="2">
    <citation type="journal article" date="2006" name="Cell">
        <title>C. elegans SIR-2.1 interacts with 14-3-3 proteins to activate DAF-16 and extend life span.</title>
        <authorList>
            <person name="Berdichevsky A."/>
            <person name="Viswanathan M."/>
            <person name="Horvitz H.R."/>
            <person name="Guarente L."/>
        </authorList>
    </citation>
    <scope>FUNCTION</scope>
    <scope>IDENTIFICATION BY MASS SPECTROMETRY</scope>
    <scope>INTERACTION WITH DAF-16 AND SIR-2.1</scope>
    <scope>SUBCELLULAR LOCATION</scope>
</reference>
<reference key="3">
    <citation type="journal article" date="2007" name="J. Biol. Chem.">
        <title>Establishing a blueprint for CED-3-dependent killing through identification of multiple substrates for this protease.</title>
        <authorList>
            <person name="Taylor R.C."/>
            <person name="Brumatti G."/>
            <person name="Ito S."/>
            <person name="Hengartner M.O."/>
            <person name="Derry W.B."/>
            <person name="Martin S.J."/>
        </authorList>
    </citation>
    <scope>PROTEOLYTIC CLEAVAGE</scope>
    <scope>MUTAGENESIS OF ASP-240</scope>
</reference>
<reference key="4">
    <citation type="journal article" date="2011" name="Cell Metab.">
        <title>Asymmetric arginine dimethylation determines life span in C. elegans by regulating forkhead transcription factor DAF-16.</title>
        <authorList>
            <person name="Takahashi Y."/>
            <person name="Daitoku H."/>
            <person name="Hirota K."/>
            <person name="Tamiya H."/>
            <person name="Yokoyama A."/>
            <person name="Kako K."/>
            <person name="Nagashima Y."/>
            <person name="Nakamura A."/>
            <person name="Shimada T."/>
            <person name="Watanabe S."/>
            <person name="Yamagata K."/>
            <person name="Yasuda K."/>
            <person name="Ishii N."/>
            <person name="Fukamizu A."/>
        </authorList>
    </citation>
    <scope>FUNCTION</scope>
    <scope>INTERACTION WITH DAF-16</scope>
    <scope>SUBCELLULAR LOCATION</scope>
</reference>
<reference evidence="6" key="5">
    <citation type="journal article" date="2011" name="PLoS Genet.">
        <title>The evolutionarily conserved longevity determinants HCF-1 and SIR-2.1/SIRT1 collaborate to regulate DAF-16/FOXO.</title>
        <authorList>
            <person name="Rizki G."/>
            <person name="Iwata T.N."/>
            <person name="Li J."/>
            <person name="Riedel C.G."/>
            <person name="Picard C.L."/>
            <person name="Jan M."/>
            <person name="Murphy C.T."/>
            <person name="Lee S.S."/>
        </authorList>
    </citation>
    <scope>FUNCTION</scope>
    <scope>INTERACTION HCF-1</scope>
</reference>
<reference key="6">
    <citation type="journal article" date="2013" name="Exp. Cell Res.">
        <title>Yes-associated protein homolog, YAP-1, is involved in the thermotolerance and aging in the nematode Caenorhabditis elegans.</title>
        <authorList>
            <person name="Iwasa H."/>
            <person name="Maimaiti S."/>
            <person name="Kuroyanagi H."/>
            <person name="Kawano S."/>
            <person name="Inami K."/>
            <person name="Timalsina S."/>
            <person name="Ikeda M."/>
            <person name="Nakagawa K."/>
            <person name="Hata Y."/>
        </authorList>
    </citation>
    <scope>FUNCTION</scope>
</reference>
<accession>Q20655</accession>
<keyword id="KW-0963">Cytoplasm</keyword>
<keyword id="KW-0539">Nucleus</keyword>
<keyword id="KW-1185">Reference proteome</keyword>
<gene>
    <name evidence="8" type="primary">ftt-2</name>
    <name evidence="8" type="ORF">F52D10.3</name>
</gene>
<feature type="chain" id="PRO_0000058648" description="14-3-3-like protein 2">
    <location>
        <begin position="1"/>
        <end position="248"/>
    </location>
</feature>
<feature type="site" description="Cleavage; by ced-3" evidence="2">
    <location>
        <begin position="240"/>
        <end position="241"/>
    </location>
</feature>
<feature type="mutagenesis site" description="Loss of ced-3-mediated cleavage." evidence="2">
    <original>D</original>
    <variation>E</variation>
    <location>
        <position position="240"/>
    </location>
</feature>
<protein>
    <recommendedName>
        <fullName>14-3-3-like protein 2</fullName>
    </recommendedName>
</protein>
<sequence length="248" mass="28067">MSDGKEELVNRAKLAEQAERYDDMAASMKKVTELGAELSNEERNLLSVAYKNVVGARRSSWRVISSIEQKTEGSEKKQQMAKEYREKVEKELRDICQDVLNLLDKFLIPKAGAAESKVFYLKMKGDYYRYLAEVASGDDRNSVVEKSQQSYQEAFDIAKDKMQPTHPIRLGLALNFSVFFYEILNAPDKACQLAKQAFDDAIAELDTLNEDSYKDSTLIMQLLRDNLTLWTSDAATDDTDANETEGGN</sequence>
<name>14332_CAEEL</name>
<dbReference type="EMBL" id="Z66564">
    <property type="protein sequence ID" value="CAA91474.1"/>
    <property type="molecule type" value="Genomic_DNA"/>
</dbReference>
<dbReference type="PIR" id="T22500">
    <property type="entry name" value="T22500"/>
</dbReference>
<dbReference type="RefSeq" id="NP_509939.1">
    <property type="nucleotide sequence ID" value="NM_077538.9"/>
</dbReference>
<dbReference type="SMR" id="Q20655"/>
<dbReference type="BioGRID" id="46256">
    <property type="interactions" value="30"/>
</dbReference>
<dbReference type="ComplexPortal" id="CPX-3882">
    <property type="entry name" value="daf-16-ftt-2 complex"/>
</dbReference>
<dbReference type="ComplexPortal" id="CPX-3885">
    <property type="entry name" value="sir-2.1-ftt-2 complex"/>
</dbReference>
<dbReference type="DIP" id="DIP-25505N"/>
<dbReference type="FunCoup" id="Q20655">
    <property type="interactions" value="2793"/>
</dbReference>
<dbReference type="IntAct" id="Q20655">
    <property type="interactions" value="8"/>
</dbReference>
<dbReference type="STRING" id="6239.F52D10.3a.3"/>
<dbReference type="iPTMnet" id="Q20655"/>
<dbReference type="PaxDb" id="6239-F52D10.3a.1"/>
<dbReference type="PeptideAtlas" id="Q20655"/>
<dbReference type="EnsemblMetazoa" id="F52D10.3a.1">
    <property type="protein sequence ID" value="F52D10.3a.1"/>
    <property type="gene ID" value="WBGene00001502"/>
</dbReference>
<dbReference type="GeneID" id="181348"/>
<dbReference type="KEGG" id="cel:CELE_F52D10.3"/>
<dbReference type="UCSC" id="F52D10.3b.1">
    <property type="organism name" value="c. elegans"/>
</dbReference>
<dbReference type="AGR" id="WB:WBGene00001502"/>
<dbReference type="CTD" id="181348"/>
<dbReference type="WormBase" id="F52D10.3a">
    <property type="protein sequence ID" value="CE03389"/>
    <property type="gene ID" value="WBGene00001502"/>
    <property type="gene designation" value="ftt-2"/>
</dbReference>
<dbReference type="eggNOG" id="KOG0841">
    <property type="taxonomic scope" value="Eukaryota"/>
</dbReference>
<dbReference type="HOGENOM" id="CLU_058290_1_0_1"/>
<dbReference type="InParanoid" id="Q20655"/>
<dbReference type="OMA" id="YDEMVNE"/>
<dbReference type="OrthoDB" id="10260625at2759"/>
<dbReference type="PhylomeDB" id="Q20655"/>
<dbReference type="Reactome" id="R-CEL-165159">
    <property type="pathway name" value="MTOR signalling"/>
</dbReference>
<dbReference type="Reactome" id="R-CEL-166208">
    <property type="pathway name" value="mTORC1-mediated signalling"/>
</dbReference>
<dbReference type="Reactome" id="R-CEL-170968">
    <property type="pathway name" value="Frs2-mediated activation"/>
</dbReference>
<dbReference type="Reactome" id="R-CEL-2028269">
    <property type="pathway name" value="Signaling by Hippo"/>
</dbReference>
<dbReference type="Reactome" id="R-CEL-3769402">
    <property type="pathway name" value="Deactivation of the beta-catenin transactivating complex"/>
</dbReference>
<dbReference type="Reactome" id="R-CEL-392517">
    <property type="pathway name" value="Rap1 signalling"/>
</dbReference>
<dbReference type="Reactome" id="R-CEL-430116">
    <property type="pathway name" value="GP1b-IX-V activation signalling"/>
</dbReference>
<dbReference type="Reactome" id="R-CEL-450385">
    <property type="pathway name" value="Butyrate Response Factor 1 (BRF1) binds and destabilizes mRNA"/>
</dbReference>
<dbReference type="Reactome" id="R-CEL-450513">
    <property type="pathway name" value="Tristetraprolin (TTP, ZFP36) binds and destabilizes mRNA"/>
</dbReference>
<dbReference type="Reactome" id="R-CEL-450604">
    <property type="pathway name" value="KSRP (KHSRP) binds and destabilizes mRNA"/>
</dbReference>
<dbReference type="Reactome" id="R-CEL-5625740">
    <property type="pathway name" value="RHO GTPases activate PKNs"/>
</dbReference>
<dbReference type="Reactome" id="R-CEL-5673000">
    <property type="pathway name" value="RAF activation"/>
</dbReference>
<dbReference type="Reactome" id="R-CEL-5674135">
    <property type="pathway name" value="MAP2K and MAPK activation"/>
</dbReference>
<dbReference type="Reactome" id="R-CEL-5675221">
    <property type="pathway name" value="Negative regulation of MAPK pathway"/>
</dbReference>
<dbReference type="Reactome" id="R-CEL-6804114">
    <property type="pathway name" value="TP53 Regulates Transcription of Genes Involved in G2 Cell Cycle Arrest"/>
</dbReference>
<dbReference type="Reactome" id="R-CEL-75035">
    <property type="pathway name" value="Chk1/Chk2(Cds1) mediated inactivation of Cyclin B:Cdk1 complex"/>
</dbReference>
<dbReference type="Reactome" id="R-CEL-9013700">
    <property type="pathway name" value="NOTCH4 Activation and Transmission of Signal to the Nucleus"/>
</dbReference>
<dbReference type="Reactome" id="R-CEL-9614399">
    <property type="pathway name" value="Regulation of localization of FOXO transcription factors"/>
</dbReference>
<dbReference type="PRO" id="PR:Q20655"/>
<dbReference type="Proteomes" id="UP000001940">
    <property type="component" value="Chromosome X"/>
</dbReference>
<dbReference type="Bgee" id="WBGene00001502">
    <property type="expression patterns" value="Expressed in pharyngeal muscle cell (C elegans) and 21 other cell types or tissues"/>
</dbReference>
<dbReference type="ExpressionAtlas" id="Q20655">
    <property type="expression patterns" value="baseline and differential"/>
</dbReference>
<dbReference type="GO" id="GO:0005737">
    <property type="term" value="C:cytoplasm"/>
    <property type="evidence" value="ECO:0000314"/>
    <property type="project" value="WormBase"/>
</dbReference>
<dbReference type="GO" id="GO:0005634">
    <property type="term" value="C:nucleus"/>
    <property type="evidence" value="ECO:0000314"/>
    <property type="project" value="WormBase"/>
</dbReference>
<dbReference type="GO" id="GO:0140297">
    <property type="term" value="F:DNA-binding transcription factor binding"/>
    <property type="evidence" value="ECO:0000353"/>
    <property type="project" value="WormBase"/>
</dbReference>
<dbReference type="GO" id="GO:0040024">
    <property type="term" value="P:dauer larval development"/>
    <property type="evidence" value="ECO:0000316"/>
    <property type="project" value="WormBase"/>
</dbReference>
<dbReference type="GO" id="GO:0051457">
    <property type="term" value="P:maintenance of protein location in nucleus"/>
    <property type="evidence" value="ECO:0000303"/>
    <property type="project" value="ComplexPortal"/>
</dbReference>
<dbReference type="GO" id="GO:0010629">
    <property type="term" value="P:negative regulation of gene expression"/>
    <property type="evidence" value="ECO:0000303"/>
    <property type="project" value="ComplexPortal"/>
</dbReference>
<dbReference type="GO" id="GO:0042308">
    <property type="term" value="P:negative regulation of protein import into nucleus"/>
    <property type="evidence" value="ECO:0000315"/>
    <property type="project" value="WormBase"/>
</dbReference>
<dbReference type="GO" id="GO:0008104">
    <property type="term" value="P:protein localization"/>
    <property type="evidence" value="ECO:0000318"/>
    <property type="project" value="GO_Central"/>
</dbReference>
<dbReference type="GO" id="GO:0010468">
    <property type="term" value="P:regulation of gene expression"/>
    <property type="evidence" value="ECO:0000303"/>
    <property type="project" value="ComplexPortal"/>
</dbReference>
<dbReference type="GO" id="GO:0007165">
    <property type="term" value="P:signal transduction"/>
    <property type="evidence" value="ECO:0000318"/>
    <property type="project" value="GO_Central"/>
</dbReference>
<dbReference type="FunFam" id="1.20.190.20:FF:000001">
    <property type="entry name" value="14-3-3 gamma 1"/>
    <property type="match status" value="1"/>
</dbReference>
<dbReference type="Gene3D" id="1.20.190.20">
    <property type="entry name" value="14-3-3 domain"/>
    <property type="match status" value="1"/>
</dbReference>
<dbReference type="InterPro" id="IPR000308">
    <property type="entry name" value="14-3-3"/>
</dbReference>
<dbReference type="InterPro" id="IPR023409">
    <property type="entry name" value="14-3-3_CS"/>
</dbReference>
<dbReference type="InterPro" id="IPR036815">
    <property type="entry name" value="14-3-3_dom_sf"/>
</dbReference>
<dbReference type="InterPro" id="IPR023410">
    <property type="entry name" value="14-3-3_domain"/>
</dbReference>
<dbReference type="PANTHER" id="PTHR18860">
    <property type="entry name" value="14-3-3 PROTEIN"/>
    <property type="match status" value="1"/>
</dbReference>
<dbReference type="Pfam" id="PF00244">
    <property type="entry name" value="14-3-3"/>
    <property type="match status" value="1"/>
</dbReference>
<dbReference type="PIRSF" id="PIRSF000868">
    <property type="entry name" value="14-3-3"/>
    <property type="match status" value="1"/>
</dbReference>
<dbReference type="PRINTS" id="PR00305">
    <property type="entry name" value="1433ZETA"/>
</dbReference>
<dbReference type="SMART" id="SM00101">
    <property type="entry name" value="14_3_3"/>
    <property type="match status" value="1"/>
</dbReference>
<dbReference type="SUPFAM" id="SSF48445">
    <property type="entry name" value="14-3-3 protein"/>
    <property type="match status" value="1"/>
</dbReference>
<dbReference type="PROSITE" id="PS00796">
    <property type="entry name" value="1433_1"/>
    <property type="match status" value="1"/>
</dbReference>
<dbReference type="PROSITE" id="PS00797">
    <property type="entry name" value="1433_2"/>
    <property type="match status" value="1"/>
</dbReference>
<evidence type="ECO:0000269" key="1">
    <source>
    </source>
</evidence>
<evidence type="ECO:0000269" key="2">
    <source>
    </source>
</evidence>
<evidence type="ECO:0000269" key="3">
    <source>
    </source>
</evidence>
<evidence type="ECO:0000269" key="4">
    <source>
    </source>
</evidence>
<evidence type="ECO:0000269" key="5">
    <source>
    </source>
</evidence>
<evidence type="ECO:0000305" key="6"/>
<evidence type="ECO:0000305" key="7">
    <source>
    </source>
</evidence>
<evidence type="ECO:0000312" key="8">
    <source>
        <dbReference type="WormBase" id="F52D10.3a"/>
    </source>
</evidence>
<organism>
    <name type="scientific">Caenorhabditis elegans</name>
    <dbReference type="NCBI Taxonomy" id="6239"/>
    <lineage>
        <taxon>Eukaryota</taxon>
        <taxon>Metazoa</taxon>
        <taxon>Ecdysozoa</taxon>
        <taxon>Nematoda</taxon>
        <taxon>Chromadorea</taxon>
        <taxon>Rhabditida</taxon>
        <taxon>Rhabditina</taxon>
        <taxon>Rhabditomorpha</taxon>
        <taxon>Rhabditoidea</taxon>
        <taxon>Rhabditidae</taxon>
        <taxon>Peloderinae</taxon>
        <taxon>Caenorhabditis</taxon>
    </lineage>
</organism>
<comment type="function">
    <text evidence="1 3 4 5">Required for extension of lifespan by sir-2.1 (PubMed:16777605). Required to modulate lifespan, in concert with hcf-1, acting redundantly with 14-3-3-like protein par-5 (PubMed:21909281). Promotes nuclear export of yap-1 (PubMed:23396260). Negatively regulates the transcriptional activity of daf-16 by sequestering it to the cytoplasm (PubMed:21531333).</text>
</comment>
<comment type="subunit">
    <text evidence="1 3 4">Interacts with daf-16 (PubMed:16777605, PubMed:21531333). Interacts with sir-2.1 (PubMed:16777605). Interacts with hcf-1 (PubMed:21909281).</text>
</comment>
<comment type="interaction">
    <interactant intactId="EBI-966073">
        <id>Q20655</id>
    </interactant>
    <interactant intactId="EBI-4480523">
        <id>G5EC23</id>
        <label>hcf-1</label>
    </interactant>
    <organismsDiffer>false</organismsDiffer>
    <experiments>2</experiments>
</comment>
<comment type="interaction">
    <interactant intactId="EBI-966073">
        <id>Q20655</id>
    </interactant>
    <interactant intactId="EBI-3843983">
        <id>Q11184</id>
        <label>let-756</label>
    </interactant>
    <organismsDiffer>false</organismsDiffer>
    <experiments>3</experiments>
</comment>
<comment type="interaction">
    <interactant intactId="EBI-966073">
        <id>Q20655</id>
    </interactant>
    <interactant intactId="EBI-966082">
        <id>Q21921</id>
        <label>sir-2.1</label>
    </interactant>
    <organismsDiffer>false</organismsDiffer>
    <experiments>3</experiments>
</comment>
<comment type="subcellular location">
    <subcellularLocation>
        <location evidence="1 7">Cytoplasm</location>
    </subcellularLocation>
    <subcellularLocation>
        <location evidence="1">Nucleus</location>
    </subcellularLocation>
</comment>
<comment type="similarity">
    <text evidence="6">Belongs to the 14-3-3 family.</text>
</comment>
<proteinExistence type="evidence at protein level"/>